<gene>
    <name evidence="1" type="primary">lgt</name>
    <name type="ordered locus">WRi_006110</name>
</gene>
<reference key="1">
    <citation type="journal article" date="2009" name="Proc. Natl. Acad. Sci. U.S.A.">
        <title>The mosaic genome structure of the Wolbachia wRi strain infecting Drosophila simulans.</title>
        <authorList>
            <person name="Klasson L."/>
            <person name="Westberg J."/>
            <person name="Sapountzis P."/>
            <person name="Naeslund K."/>
            <person name="Lutnaes Y."/>
            <person name="Darby A.C."/>
            <person name="Veneti Z."/>
            <person name="Chen L."/>
            <person name="Braig H.R."/>
            <person name="Garrett R."/>
            <person name="Bourtzis K."/>
            <person name="Andersson S.G."/>
        </authorList>
    </citation>
    <scope>NUCLEOTIDE SEQUENCE [LARGE SCALE GENOMIC DNA]</scope>
    <source>
        <strain>wRi</strain>
    </source>
</reference>
<name>LGT_WOLWR</name>
<comment type="function">
    <text evidence="1">Catalyzes the transfer of the diacylglyceryl group from phosphatidylglycerol to the sulfhydryl group of the N-terminal cysteine of a prolipoprotein, the first step in the formation of mature lipoproteins.</text>
</comment>
<comment type="catalytic activity">
    <reaction evidence="1">
        <text>L-cysteinyl-[prolipoprotein] + a 1,2-diacyl-sn-glycero-3-phospho-(1'-sn-glycerol) = an S-1,2-diacyl-sn-glyceryl-L-cysteinyl-[prolipoprotein] + sn-glycerol 1-phosphate + H(+)</text>
        <dbReference type="Rhea" id="RHEA:56712"/>
        <dbReference type="Rhea" id="RHEA-COMP:14679"/>
        <dbReference type="Rhea" id="RHEA-COMP:14680"/>
        <dbReference type="ChEBI" id="CHEBI:15378"/>
        <dbReference type="ChEBI" id="CHEBI:29950"/>
        <dbReference type="ChEBI" id="CHEBI:57685"/>
        <dbReference type="ChEBI" id="CHEBI:64716"/>
        <dbReference type="ChEBI" id="CHEBI:140658"/>
        <dbReference type="EC" id="2.5.1.145"/>
    </reaction>
</comment>
<comment type="pathway">
    <text evidence="1">Protein modification; lipoprotein biosynthesis (diacylglyceryl transfer).</text>
</comment>
<comment type="subcellular location">
    <subcellularLocation>
        <location evidence="1">Cell membrane</location>
        <topology evidence="1">Multi-pass membrane protein</topology>
    </subcellularLocation>
</comment>
<comment type="similarity">
    <text evidence="1">Belongs to the Lgt family.</text>
</comment>
<proteinExistence type="inferred from homology"/>
<organism>
    <name type="scientific">Wolbachia sp. subsp. Drosophila simulans (strain wRi)</name>
    <dbReference type="NCBI Taxonomy" id="66084"/>
    <lineage>
        <taxon>Bacteria</taxon>
        <taxon>Pseudomonadati</taxon>
        <taxon>Pseudomonadota</taxon>
        <taxon>Alphaproteobacteria</taxon>
        <taxon>Rickettsiales</taxon>
        <taxon>Anaplasmataceae</taxon>
        <taxon>Wolbachieae</taxon>
        <taxon>Wolbachia</taxon>
    </lineage>
</organism>
<feature type="chain" id="PRO_1000164158" description="Phosphatidylglycerol--prolipoprotein diacylglyceryl transferase">
    <location>
        <begin position="1"/>
        <end position="263"/>
    </location>
</feature>
<feature type="transmembrane region" description="Helical" evidence="1">
    <location>
        <begin position="6"/>
        <end position="26"/>
    </location>
</feature>
<feature type="transmembrane region" description="Helical" evidence="1">
    <location>
        <begin position="50"/>
        <end position="70"/>
    </location>
</feature>
<feature type="transmembrane region" description="Helical" evidence="1">
    <location>
        <begin position="85"/>
        <end position="105"/>
    </location>
</feature>
<feature type="transmembrane region" description="Helical" evidence="1">
    <location>
        <begin position="112"/>
        <end position="132"/>
    </location>
</feature>
<feature type="transmembrane region" description="Helical" evidence="1">
    <location>
        <begin position="169"/>
        <end position="189"/>
    </location>
</feature>
<feature type="transmembrane region" description="Helical" evidence="1">
    <location>
        <begin position="197"/>
        <end position="217"/>
    </location>
</feature>
<feature type="transmembrane region" description="Helical" evidence="1">
    <location>
        <begin position="233"/>
        <end position="253"/>
    </location>
</feature>
<feature type="binding site" evidence="1">
    <location>
        <position position="133"/>
    </location>
    <ligand>
        <name>a 1,2-diacyl-sn-glycero-3-phospho-(1'-sn-glycerol)</name>
        <dbReference type="ChEBI" id="CHEBI:64716"/>
    </ligand>
</feature>
<sequence>MSLNPVIFSIGPVSIYWYSLAYVLGIVFAYWYLHRLDDQKIFTKNFYDSLLTATIVGIILGGRLGYVLIYDPVLYISNPIEILKTWEGGMSFHGGAIGVLLAVIISCRRHNIPIFYALDLVSCGVPIGLFLGRIGNFINGELFGRVTTMPWGMVFPESGDNLLHHPSQLYEALFEGLLLFAVANSLFFLTRIRLYHGALTGIAVMWYGIARFFVEFFREPDYQIGYLWLDLTMGQLLSIPMVLLGMLVYLGALNLKFNTKSVT</sequence>
<evidence type="ECO:0000255" key="1">
    <source>
        <dbReference type="HAMAP-Rule" id="MF_01147"/>
    </source>
</evidence>
<accession>C0R393</accession>
<protein>
    <recommendedName>
        <fullName evidence="1">Phosphatidylglycerol--prolipoprotein diacylglyceryl transferase</fullName>
        <ecNumber evidence="1">2.5.1.145</ecNumber>
    </recommendedName>
</protein>
<keyword id="KW-1003">Cell membrane</keyword>
<keyword id="KW-0472">Membrane</keyword>
<keyword id="KW-0808">Transferase</keyword>
<keyword id="KW-0812">Transmembrane</keyword>
<keyword id="KW-1133">Transmembrane helix</keyword>
<dbReference type="EC" id="2.5.1.145" evidence="1"/>
<dbReference type="EMBL" id="CP001391">
    <property type="protein sequence ID" value="ACN95385.1"/>
    <property type="molecule type" value="Genomic_DNA"/>
</dbReference>
<dbReference type="RefSeq" id="WP_006280508.1">
    <property type="nucleotide sequence ID" value="NZ_MKIF01000015.1"/>
</dbReference>
<dbReference type="SMR" id="C0R393"/>
<dbReference type="STRING" id="66084.WRi_006110"/>
<dbReference type="KEGG" id="wri:WRi_006110"/>
<dbReference type="HOGENOM" id="CLU_013386_1_0_5"/>
<dbReference type="UniPathway" id="UPA00664"/>
<dbReference type="Proteomes" id="UP000001293">
    <property type="component" value="Chromosome"/>
</dbReference>
<dbReference type="GO" id="GO:0005886">
    <property type="term" value="C:plasma membrane"/>
    <property type="evidence" value="ECO:0007669"/>
    <property type="project" value="UniProtKB-SubCell"/>
</dbReference>
<dbReference type="GO" id="GO:0008961">
    <property type="term" value="F:phosphatidylglycerol-prolipoprotein diacylglyceryl transferase activity"/>
    <property type="evidence" value="ECO:0007669"/>
    <property type="project" value="UniProtKB-UniRule"/>
</dbReference>
<dbReference type="GO" id="GO:0042158">
    <property type="term" value="P:lipoprotein biosynthetic process"/>
    <property type="evidence" value="ECO:0007669"/>
    <property type="project" value="UniProtKB-UniRule"/>
</dbReference>
<dbReference type="HAMAP" id="MF_01147">
    <property type="entry name" value="Lgt"/>
    <property type="match status" value="1"/>
</dbReference>
<dbReference type="InterPro" id="IPR001640">
    <property type="entry name" value="Lgt"/>
</dbReference>
<dbReference type="NCBIfam" id="TIGR00544">
    <property type="entry name" value="lgt"/>
    <property type="match status" value="1"/>
</dbReference>
<dbReference type="PANTHER" id="PTHR30589:SF0">
    <property type="entry name" value="PHOSPHATIDYLGLYCEROL--PROLIPOPROTEIN DIACYLGLYCERYL TRANSFERASE"/>
    <property type="match status" value="1"/>
</dbReference>
<dbReference type="PANTHER" id="PTHR30589">
    <property type="entry name" value="PROLIPOPROTEIN DIACYLGLYCERYL TRANSFERASE"/>
    <property type="match status" value="1"/>
</dbReference>
<dbReference type="Pfam" id="PF01790">
    <property type="entry name" value="LGT"/>
    <property type="match status" value="1"/>
</dbReference>
<dbReference type="PROSITE" id="PS01311">
    <property type="entry name" value="LGT"/>
    <property type="match status" value="1"/>
</dbReference>